<gene>
    <name evidence="1" type="primary">rpsD</name>
    <name type="ordered locus">SPD_0083</name>
</gene>
<protein>
    <recommendedName>
        <fullName evidence="1">Small ribosomal subunit protein uS4</fullName>
    </recommendedName>
    <alternativeName>
        <fullName evidence="2">30S ribosomal protein S4</fullName>
    </alternativeName>
</protein>
<accession>Q04MZ3</accession>
<keyword id="KW-1185">Reference proteome</keyword>
<keyword id="KW-0687">Ribonucleoprotein</keyword>
<keyword id="KW-0689">Ribosomal protein</keyword>
<keyword id="KW-0694">RNA-binding</keyword>
<keyword id="KW-0699">rRNA-binding</keyword>
<sequence length="203" mass="23029">MSRYTGPSWKQARRLGLSLTGTGKELARRNYVPGQHGPNNRSKLSEYGLQLAEKQKLRFTYGVGEKQFRNLFVQATKIKGGILGFNFMLLLERRLDNVVYRLGLATTRRQARQFVNHGHILVDGKRVDIPSYRVTPGQVISVREKSLKVPAILEAVEATLGRPAFVSFDAEKLEGSLTRLPERDEINPEINEALVVEFYNKML</sequence>
<proteinExistence type="inferred from homology"/>
<feature type="chain" id="PRO_0000293377" description="Small ribosomal subunit protein uS4">
    <location>
        <begin position="1"/>
        <end position="203"/>
    </location>
</feature>
<feature type="domain" description="S4 RNA-binding" evidence="1">
    <location>
        <begin position="93"/>
        <end position="156"/>
    </location>
</feature>
<name>RS4_STRP2</name>
<comment type="function">
    <text evidence="1">One of the primary rRNA binding proteins, it binds directly to 16S rRNA where it nucleates assembly of the body of the 30S subunit.</text>
</comment>
<comment type="function">
    <text evidence="1">With S5 and S12 plays an important role in translational accuracy.</text>
</comment>
<comment type="subunit">
    <text evidence="1">Part of the 30S ribosomal subunit. Contacts protein S5. The interaction surface between S4 and S5 is involved in control of translational fidelity.</text>
</comment>
<comment type="similarity">
    <text evidence="1">Belongs to the universal ribosomal protein uS4 family.</text>
</comment>
<dbReference type="EMBL" id="CP000410">
    <property type="protein sequence ID" value="ABJ54877.1"/>
    <property type="molecule type" value="Genomic_DNA"/>
</dbReference>
<dbReference type="RefSeq" id="WP_000092756.1">
    <property type="nucleotide sequence ID" value="NZ_JAMLJR010000020.1"/>
</dbReference>
<dbReference type="SMR" id="Q04MZ3"/>
<dbReference type="PaxDb" id="373153-SPD_0083"/>
<dbReference type="GeneID" id="93738707"/>
<dbReference type="KEGG" id="spd:SPD_0083"/>
<dbReference type="eggNOG" id="COG0522">
    <property type="taxonomic scope" value="Bacteria"/>
</dbReference>
<dbReference type="HOGENOM" id="CLU_092403_0_1_9"/>
<dbReference type="BioCyc" id="SPNE373153:G1G6V-91-MONOMER"/>
<dbReference type="Proteomes" id="UP000001452">
    <property type="component" value="Chromosome"/>
</dbReference>
<dbReference type="GO" id="GO:0015935">
    <property type="term" value="C:small ribosomal subunit"/>
    <property type="evidence" value="ECO:0007669"/>
    <property type="project" value="InterPro"/>
</dbReference>
<dbReference type="GO" id="GO:0019843">
    <property type="term" value="F:rRNA binding"/>
    <property type="evidence" value="ECO:0007669"/>
    <property type="project" value="UniProtKB-UniRule"/>
</dbReference>
<dbReference type="GO" id="GO:0003735">
    <property type="term" value="F:structural constituent of ribosome"/>
    <property type="evidence" value="ECO:0007669"/>
    <property type="project" value="InterPro"/>
</dbReference>
<dbReference type="GO" id="GO:0042274">
    <property type="term" value="P:ribosomal small subunit biogenesis"/>
    <property type="evidence" value="ECO:0007669"/>
    <property type="project" value="TreeGrafter"/>
</dbReference>
<dbReference type="GO" id="GO:0006412">
    <property type="term" value="P:translation"/>
    <property type="evidence" value="ECO:0007669"/>
    <property type="project" value="UniProtKB-UniRule"/>
</dbReference>
<dbReference type="CDD" id="cd00165">
    <property type="entry name" value="S4"/>
    <property type="match status" value="1"/>
</dbReference>
<dbReference type="FunFam" id="1.10.1050.10:FF:000001">
    <property type="entry name" value="30S ribosomal protein S4"/>
    <property type="match status" value="1"/>
</dbReference>
<dbReference type="FunFam" id="3.10.290.10:FF:000001">
    <property type="entry name" value="30S ribosomal protein S4"/>
    <property type="match status" value="1"/>
</dbReference>
<dbReference type="Gene3D" id="1.10.1050.10">
    <property type="entry name" value="Ribosomal Protein S4 Delta 41, Chain A, domain 1"/>
    <property type="match status" value="1"/>
</dbReference>
<dbReference type="Gene3D" id="3.10.290.10">
    <property type="entry name" value="RNA-binding S4 domain"/>
    <property type="match status" value="1"/>
</dbReference>
<dbReference type="HAMAP" id="MF_01306_B">
    <property type="entry name" value="Ribosomal_uS4_B"/>
    <property type="match status" value="1"/>
</dbReference>
<dbReference type="InterPro" id="IPR022801">
    <property type="entry name" value="Ribosomal_uS4"/>
</dbReference>
<dbReference type="InterPro" id="IPR005709">
    <property type="entry name" value="Ribosomal_uS4_bac-type"/>
</dbReference>
<dbReference type="InterPro" id="IPR018079">
    <property type="entry name" value="Ribosomal_uS4_CS"/>
</dbReference>
<dbReference type="InterPro" id="IPR001912">
    <property type="entry name" value="Ribosomal_uS4_N"/>
</dbReference>
<dbReference type="InterPro" id="IPR002942">
    <property type="entry name" value="S4_RNA-bd"/>
</dbReference>
<dbReference type="InterPro" id="IPR036986">
    <property type="entry name" value="S4_RNA-bd_sf"/>
</dbReference>
<dbReference type="NCBIfam" id="NF003717">
    <property type="entry name" value="PRK05327.1"/>
    <property type="match status" value="1"/>
</dbReference>
<dbReference type="NCBIfam" id="TIGR01017">
    <property type="entry name" value="rpsD_bact"/>
    <property type="match status" value="1"/>
</dbReference>
<dbReference type="PANTHER" id="PTHR11831">
    <property type="entry name" value="30S 40S RIBOSOMAL PROTEIN"/>
    <property type="match status" value="1"/>
</dbReference>
<dbReference type="PANTHER" id="PTHR11831:SF4">
    <property type="entry name" value="SMALL RIBOSOMAL SUBUNIT PROTEIN US4M"/>
    <property type="match status" value="1"/>
</dbReference>
<dbReference type="Pfam" id="PF00163">
    <property type="entry name" value="Ribosomal_S4"/>
    <property type="match status" value="1"/>
</dbReference>
<dbReference type="Pfam" id="PF01479">
    <property type="entry name" value="S4"/>
    <property type="match status" value="1"/>
</dbReference>
<dbReference type="SMART" id="SM01390">
    <property type="entry name" value="Ribosomal_S4"/>
    <property type="match status" value="1"/>
</dbReference>
<dbReference type="SMART" id="SM00363">
    <property type="entry name" value="S4"/>
    <property type="match status" value="1"/>
</dbReference>
<dbReference type="SUPFAM" id="SSF55174">
    <property type="entry name" value="Alpha-L RNA-binding motif"/>
    <property type="match status" value="1"/>
</dbReference>
<dbReference type="PROSITE" id="PS00632">
    <property type="entry name" value="RIBOSOMAL_S4"/>
    <property type="match status" value="1"/>
</dbReference>
<dbReference type="PROSITE" id="PS50889">
    <property type="entry name" value="S4"/>
    <property type="match status" value="1"/>
</dbReference>
<evidence type="ECO:0000255" key="1">
    <source>
        <dbReference type="HAMAP-Rule" id="MF_01306"/>
    </source>
</evidence>
<evidence type="ECO:0000305" key="2"/>
<reference key="1">
    <citation type="journal article" date="2007" name="J. Bacteriol.">
        <title>Genome sequence of Avery's virulent serotype 2 strain D39 of Streptococcus pneumoniae and comparison with that of unencapsulated laboratory strain R6.</title>
        <authorList>
            <person name="Lanie J.A."/>
            <person name="Ng W.-L."/>
            <person name="Kazmierczak K.M."/>
            <person name="Andrzejewski T.M."/>
            <person name="Davidsen T.M."/>
            <person name="Wayne K.J."/>
            <person name="Tettelin H."/>
            <person name="Glass J.I."/>
            <person name="Winkler M.E."/>
        </authorList>
    </citation>
    <scope>NUCLEOTIDE SEQUENCE [LARGE SCALE GENOMIC DNA]</scope>
    <source>
        <strain>D39 / NCTC 7466</strain>
    </source>
</reference>
<organism>
    <name type="scientific">Streptococcus pneumoniae serotype 2 (strain D39 / NCTC 7466)</name>
    <dbReference type="NCBI Taxonomy" id="373153"/>
    <lineage>
        <taxon>Bacteria</taxon>
        <taxon>Bacillati</taxon>
        <taxon>Bacillota</taxon>
        <taxon>Bacilli</taxon>
        <taxon>Lactobacillales</taxon>
        <taxon>Streptococcaceae</taxon>
        <taxon>Streptococcus</taxon>
    </lineage>
</organism>